<dbReference type="EC" id="7.1.2.2" evidence="1"/>
<dbReference type="EMBL" id="CP000422">
    <property type="protein sequence ID" value="ABJ68360.1"/>
    <property type="molecule type" value="Genomic_DNA"/>
</dbReference>
<dbReference type="RefSeq" id="WP_002833685.1">
    <property type="nucleotide sequence ID" value="NC_008525.1"/>
</dbReference>
<dbReference type="SMR" id="Q03EL2"/>
<dbReference type="STRING" id="278197.PEPE_1319"/>
<dbReference type="GeneID" id="33061461"/>
<dbReference type="KEGG" id="ppe:PEPE_1319"/>
<dbReference type="eggNOG" id="COG0056">
    <property type="taxonomic scope" value="Bacteria"/>
</dbReference>
<dbReference type="HOGENOM" id="CLU_010091_2_1_9"/>
<dbReference type="OrthoDB" id="9803053at2"/>
<dbReference type="Proteomes" id="UP000000773">
    <property type="component" value="Chromosome"/>
</dbReference>
<dbReference type="GO" id="GO:0005886">
    <property type="term" value="C:plasma membrane"/>
    <property type="evidence" value="ECO:0007669"/>
    <property type="project" value="UniProtKB-SubCell"/>
</dbReference>
<dbReference type="GO" id="GO:0045259">
    <property type="term" value="C:proton-transporting ATP synthase complex"/>
    <property type="evidence" value="ECO:0007669"/>
    <property type="project" value="UniProtKB-KW"/>
</dbReference>
<dbReference type="GO" id="GO:0043531">
    <property type="term" value="F:ADP binding"/>
    <property type="evidence" value="ECO:0007669"/>
    <property type="project" value="TreeGrafter"/>
</dbReference>
<dbReference type="GO" id="GO:0005524">
    <property type="term" value="F:ATP binding"/>
    <property type="evidence" value="ECO:0007669"/>
    <property type="project" value="UniProtKB-UniRule"/>
</dbReference>
<dbReference type="GO" id="GO:0046933">
    <property type="term" value="F:proton-transporting ATP synthase activity, rotational mechanism"/>
    <property type="evidence" value="ECO:0007669"/>
    <property type="project" value="UniProtKB-UniRule"/>
</dbReference>
<dbReference type="CDD" id="cd18113">
    <property type="entry name" value="ATP-synt_F1_alpha_C"/>
    <property type="match status" value="1"/>
</dbReference>
<dbReference type="CDD" id="cd18116">
    <property type="entry name" value="ATP-synt_F1_alpha_N"/>
    <property type="match status" value="1"/>
</dbReference>
<dbReference type="CDD" id="cd01132">
    <property type="entry name" value="F1-ATPase_alpha_CD"/>
    <property type="match status" value="1"/>
</dbReference>
<dbReference type="FunFam" id="1.20.150.20:FF:000001">
    <property type="entry name" value="ATP synthase subunit alpha"/>
    <property type="match status" value="1"/>
</dbReference>
<dbReference type="FunFam" id="2.40.30.20:FF:000001">
    <property type="entry name" value="ATP synthase subunit alpha"/>
    <property type="match status" value="1"/>
</dbReference>
<dbReference type="FunFam" id="3.40.50.300:FF:000002">
    <property type="entry name" value="ATP synthase subunit alpha"/>
    <property type="match status" value="1"/>
</dbReference>
<dbReference type="Gene3D" id="2.40.30.20">
    <property type="match status" value="1"/>
</dbReference>
<dbReference type="Gene3D" id="1.20.150.20">
    <property type="entry name" value="ATP synthase alpha/beta chain, C-terminal domain"/>
    <property type="match status" value="1"/>
</dbReference>
<dbReference type="Gene3D" id="3.40.50.300">
    <property type="entry name" value="P-loop containing nucleotide triphosphate hydrolases"/>
    <property type="match status" value="1"/>
</dbReference>
<dbReference type="HAMAP" id="MF_01346">
    <property type="entry name" value="ATP_synth_alpha_bact"/>
    <property type="match status" value="1"/>
</dbReference>
<dbReference type="InterPro" id="IPR023366">
    <property type="entry name" value="ATP_synth_asu-like_sf"/>
</dbReference>
<dbReference type="InterPro" id="IPR000793">
    <property type="entry name" value="ATP_synth_asu_C"/>
</dbReference>
<dbReference type="InterPro" id="IPR038376">
    <property type="entry name" value="ATP_synth_asu_C_sf"/>
</dbReference>
<dbReference type="InterPro" id="IPR033732">
    <property type="entry name" value="ATP_synth_F1_a_nt-bd_dom"/>
</dbReference>
<dbReference type="InterPro" id="IPR005294">
    <property type="entry name" value="ATP_synth_F1_asu"/>
</dbReference>
<dbReference type="InterPro" id="IPR020003">
    <property type="entry name" value="ATPase_a/bsu_AS"/>
</dbReference>
<dbReference type="InterPro" id="IPR004100">
    <property type="entry name" value="ATPase_F1/V1/A1_a/bsu_N"/>
</dbReference>
<dbReference type="InterPro" id="IPR036121">
    <property type="entry name" value="ATPase_F1/V1/A1_a/bsu_N_sf"/>
</dbReference>
<dbReference type="InterPro" id="IPR000194">
    <property type="entry name" value="ATPase_F1/V1/A1_a/bsu_nucl-bd"/>
</dbReference>
<dbReference type="InterPro" id="IPR027417">
    <property type="entry name" value="P-loop_NTPase"/>
</dbReference>
<dbReference type="NCBIfam" id="TIGR00962">
    <property type="entry name" value="atpA"/>
    <property type="match status" value="1"/>
</dbReference>
<dbReference type="NCBIfam" id="NF009884">
    <property type="entry name" value="PRK13343.1"/>
    <property type="match status" value="1"/>
</dbReference>
<dbReference type="PANTHER" id="PTHR48082">
    <property type="entry name" value="ATP SYNTHASE SUBUNIT ALPHA, MITOCHONDRIAL"/>
    <property type="match status" value="1"/>
</dbReference>
<dbReference type="PANTHER" id="PTHR48082:SF2">
    <property type="entry name" value="ATP SYNTHASE SUBUNIT ALPHA, MITOCHONDRIAL"/>
    <property type="match status" value="1"/>
</dbReference>
<dbReference type="Pfam" id="PF00006">
    <property type="entry name" value="ATP-synt_ab"/>
    <property type="match status" value="1"/>
</dbReference>
<dbReference type="Pfam" id="PF00306">
    <property type="entry name" value="ATP-synt_ab_C"/>
    <property type="match status" value="1"/>
</dbReference>
<dbReference type="Pfam" id="PF02874">
    <property type="entry name" value="ATP-synt_ab_N"/>
    <property type="match status" value="1"/>
</dbReference>
<dbReference type="PIRSF" id="PIRSF039088">
    <property type="entry name" value="F_ATPase_subunit_alpha"/>
    <property type="match status" value="1"/>
</dbReference>
<dbReference type="SUPFAM" id="SSF47917">
    <property type="entry name" value="C-terminal domain of alpha and beta subunits of F1 ATP synthase"/>
    <property type="match status" value="1"/>
</dbReference>
<dbReference type="SUPFAM" id="SSF50615">
    <property type="entry name" value="N-terminal domain of alpha and beta subunits of F1 ATP synthase"/>
    <property type="match status" value="1"/>
</dbReference>
<dbReference type="SUPFAM" id="SSF52540">
    <property type="entry name" value="P-loop containing nucleoside triphosphate hydrolases"/>
    <property type="match status" value="1"/>
</dbReference>
<dbReference type="PROSITE" id="PS00152">
    <property type="entry name" value="ATPASE_ALPHA_BETA"/>
    <property type="match status" value="1"/>
</dbReference>
<comment type="function">
    <text evidence="1">Produces ATP from ADP in the presence of a proton gradient across the membrane. The alpha chain is a regulatory subunit.</text>
</comment>
<comment type="catalytic activity">
    <reaction evidence="1">
        <text>ATP + H2O + 4 H(+)(in) = ADP + phosphate + 5 H(+)(out)</text>
        <dbReference type="Rhea" id="RHEA:57720"/>
        <dbReference type="ChEBI" id="CHEBI:15377"/>
        <dbReference type="ChEBI" id="CHEBI:15378"/>
        <dbReference type="ChEBI" id="CHEBI:30616"/>
        <dbReference type="ChEBI" id="CHEBI:43474"/>
        <dbReference type="ChEBI" id="CHEBI:456216"/>
        <dbReference type="EC" id="7.1.2.2"/>
    </reaction>
</comment>
<comment type="subunit">
    <text evidence="1">F-type ATPases have 2 components, CF(1) - the catalytic core - and CF(0) - the membrane proton channel. CF(1) has five subunits: alpha(3), beta(3), gamma(1), delta(1), epsilon(1). CF(0) has three main subunits: a(1), b(2) and c(9-12). The alpha and beta chains form an alternating ring which encloses part of the gamma chain. CF(1) is attached to CF(0) by a central stalk formed by the gamma and epsilon chains, while a peripheral stalk is formed by the delta and b chains.</text>
</comment>
<comment type="subcellular location">
    <subcellularLocation>
        <location evidence="1">Cell membrane</location>
        <topology evidence="1">Peripheral membrane protein</topology>
    </subcellularLocation>
</comment>
<comment type="similarity">
    <text evidence="1">Belongs to the ATPase alpha/beta chains family.</text>
</comment>
<feature type="chain" id="PRO_0000302682" description="ATP synthase subunit alpha">
    <location>
        <begin position="1"/>
        <end position="505"/>
    </location>
</feature>
<feature type="binding site" evidence="1">
    <location>
        <begin position="169"/>
        <end position="176"/>
    </location>
    <ligand>
        <name>ATP</name>
        <dbReference type="ChEBI" id="CHEBI:30616"/>
    </ligand>
</feature>
<feature type="site" description="Required for activity" evidence="1">
    <location>
        <position position="362"/>
    </location>
</feature>
<keyword id="KW-0066">ATP synthesis</keyword>
<keyword id="KW-0067">ATP-binding</keyword>
<keyword id="KW-1003">Cell membrane</keyword>
<keyword id="KW-0139">CF(1)</keyword>
<keyword id="KW-0375">Hydrogen ion transport</keyword>
<keyword id="KW-0406">Ion transport</keyword>
<keyword id="KW-0472">Membrane</keyword>
<keyword id="KW-0547">Nucleotide-binding</keyword>
<keyword id="KW-1278">Translocase</keyword>
<keyword id="KW-0813">Transport</keyword>
<organism>
    <name type="scientific">Pediococcus pentosaceus (strain ATCC 25745 / CCUG 21536 / LMG 10740 / 183-1w)</name>
    <dbReference type="NCBI Taxonomy" id="278197"/>
    <lineage>
        <taxon>Bacteria</taxon>
        <taxon>Bacillati</taxon>
        <taxon>Bacillota</taxon>
        <taxon>Bacilli</taxon>
        <taxon>Lactobacillales</taxon>
        <taxon>Lactobacillaceae</taxon>
        <taxon>Pediococcus</taxon>
    </lineage>
</organism>
<sequence>MSIKAEEISALIKQQLENYQAELNVEETGTVTYVGDGIARAHGLNNALSGELLEFSNGVFGMVQNLESNDVGIVIMGNYDGIHEGDVVKRTGRIMEVPVGDALIGRVVNPLGEPLDGKGAIQTTKTRPVENKAPGVMQRKSVEQPLQTGIKAIDALVPIGRGQRELIIGDRKTGKTTIAIDTILNQKDQDMICIYVAIGQKESTVRTQVETLRRYGAMDYTIVVSAGPSEPAPMLYLAPYAGAAMGEEFMYNGKHVLIVYDDLSKQADAYRELSLILRRPPGREAYPGDIFYTHSRLLERAAKLSDDLGGGSMTALPFVETKAGDVSAYIPTNVISITDGQVFLDGDYFNSGTRPAIDAGTSVSRVGGDAQIKAMKKVAGTLRLDLASYRELESFAQFGSDLDKATQAKLARGRRTVEVLKQPLHQPLSVENQVMILYALTHGFLDNVPVDDIQRFQDELFDYIASNNKELTDEIRETKQLPDTDKMDAAIKSFAEHFQPTKEAK</sequence>
<name>ATPA_PEDPA</name>
<reference key="1">
    <citation type="journal article" date="2006" name="Proc. Natl. Acad. Sci. U.S.A.">
        <title>Comparative genomics of the lactic acid bacteria.</title>
        <authorList>
            <person name="Makarova K.S."/>
            <person name="Slesarev A."/>
            <person name="Wolf Y.I."/>
            <person name="Sorokin A."/>
            <person name="Mirkin B."/>
            <person name="Koonin E.V."/>
            <person name="Pavlov A."/>
            <person name="Pavlova N."/>
            <person name="Karamychev V."/>
            <person name="Polouchine N."/>
            <person name="Shakhova V."/>
            <person name="Grigoriev I."/>
            <person name="Lou Y."/>
            <person name="Rohksar D."/>
            <person name="Lucas S."/>
            <person name="Huang K."/>
            <person name="Goodstein D.M."/>
            <person name="Hawkins T."/>
            <person name="Plengvidhya V."/>
            <person name="Welker D."/>
            <person name="Hughes J."/>
            <person name="Goh Y."/>
            <person name="Benson A."/>
            <person name="Baldwin K."/>
            <person name="Lee J.-H."/>
            <person name="Diaz-Muniz I."/>
            <person name="Dosti B."/>
            <person name="Smeianov V."/>
            <person name="Wechter W."/>
            <person name="Barabote R."/>
            <person name="Lorca G."/>
            <person name="Altermann E."/>
            <person name="Barrangou R."/>
            <person name="Ganesan B."/>
            <person name="Xie Y."/>
            <person name="Rawsthorne H."/>
            <person name="Tamir D."/>
            <person name="Parker C."/>
            <person name="Breidt F."/>
            <person name="Broadbent J.R."/>
            <person name="Hutkins R."/>
            <person name="O'Sullivan D."/>
            <person name="Steele J."/>
            <person name="Unlu G."/>
            <person name="Saier M.H. Jr."/>
            <person name="Klaenhammer T."/>
            <person name="Richardson P."/>
            <person name="Kozyavkin S."/>
            <person name="Weimer B.C."/>
            <person name="Mills D.A."/>
        </authorList>
    </citation>
    <scope>NUCLEOTIDE SEQUENCE [LARGE SCALE GENOMIC DNA]</scope>
    <source>
        <strain>ATCC 25745 / CCUG 21536 / LMG 10740 / 183-1w</strain>
    </source>
</reference>
<accession>Q03EL2</accession>
<protein>
    <recommendedName>
        <fullName evidence="1">ATP synthase subunit alpha</fullName>
        <ecNumber evidence="1">7.1.2.2</ecNumber>
    </recommendedName>
    <alternativeName>
        <fullName evidence="1">ATP synthase F1 sector subunit alpha</fullName>
    </alternativeName>
    <alternativeName>
        <fullName evidence="1">F-ATPase subunit alpha</fullName>
    </alternativeName>
</protein>
<evidence type="ECO:0000255" key="1">
    <source>
        <dbReference type="HAMAP-Rule" id="MF_01346"/>
    </source>
</evidence>
<proteinExistence type="inferred from homology"/>
<gene>
    <name evidence="1" type="primary">atpA</name>
    <name type="ordered locus">PEPE_1319</name>
</gene>